<accession>C5D4D1</accession>
<gene>
    <name evidence="1" type="primary">acpS</name>
    <name type="ordered locus">GWCH70_0208</name>
</gene>
<organism>
    <name type="scientific">Geobacillus sp. (strain WCH70)</name>
    <dbReference type="NCBI Taxonomy" id="471223"/>
    <lineage>
        <taxon>Bacteria</taxon>
        <taxon>Bacillati</taxon>
        <taxon>Bacillota</taxon>
        <taxon>Bacilli</taxon>
        <taxon>Bacillales</taxon>
        <taxon>Anoxybacillaceae</taxon>
        <taxon>Geobacillus</taxon>
    </lineage>
</organism>
<comment type="function">
    <text evidence="1">Transfers the 4'-phosphopantetheine moiety from coenzyme A to a Ser of acyl-carrier-protein.</text>
</comment>
<comment type="catalytic activity">
    <reaction evidence="1">
        <text>apo-[ACP] + CoA = holo-[ACP] + adenosine 3',5'-bisphosphate + H(+)</text>
        <dbReference type="Rhea" id="RHEA:12068"/>
        <dbReference type="Rhea" id="RHEA-COMP:9685"/>
        <dbReference type="Rhea" id="RHEA-COMP:9690"/>
        <dbReference type="ChEBI" id="CHEBI:15378"/>
        <dbReference type="ChEBI" id="CHEBI:29999"/>
        <dbReference type="ChEBI" id="CHEBI:57287"/>
        <dbReference type="ChEBI" id="CHEBI:58343"/>
        <dbReference type="ChEBI" id="CHEBI:64479"/>
        <dbReference type="EC" id="2.7.8.7"/>
    </reaction>
</comment>
<comment type="cofactor">
    <cofactor evidence="1">
        <name>Mg(2+)</name>
        <dbReference type="ChEBI" id="CHEBI:18420"/>
    </cofactor>
</comment>
<comment type="subcellular location">
    <subcellularLocation>
        <location evidence="1">Cytoplasm</location>
    </subcellularLocation>
</comment>
<comment type="similarity">
    <text evidence="1">Belongs to the P-Pant transferase superfamily. AcpS family.</text>
</comment>
<dbReference type="EC" id="2.7.8.7" evidence="1"/>
<dbReference type="EMBL" id="CP001638">
    <property type="protein sequence ID" value="ACS23139.1"/>
    <property type="molecule type" value="Genomic_DNA"/>
</dbReference>
<dbReference type="SMR" id="C5D4D1"/>
<dbReference type="STRING" id="471223.GWCH70_0208"/>
<dbReference type="KEGG" id="gwc:GWCH70_0208"/>
<dbReference type="eggNOG" id="COG0736">
    <property type="taxonomic scope" value="Bacteria"/>
</dbReference>
<dbReference type="HOGENOM" id="CLU_089696_1_2_9"/>
<dbReference type="OrthoDB" id="517356at2"/>
<dbReference type="GO" id="GO:0005829">
    <property type="term" value="C:cytosol"/>
    <property type="evidence" value="ECO:0007669"/>
    <property type="project" value="TreeGrafter"/>
</dbReference>
<dbReference type="GO" id="GO:0008897">
    <property type="term" value="F:holo-[acyl-carrier-protein] synthase activity"/>
    <property type="evidence" value="ECO:0007669"/>
    <property type="project" value="UniProtKB-UniRule"/>
</dbReference>
<dbReference type="GO" id="GO:0000287">
    <property type="term" value="F:magnesium ion binding"/>
    <property type="evidence" value="ECO:0007669"/>
    <property type="project" value="UniProtKB-UniRule"/>
</dbReference>
<dbReference type="GO" id="GO:0006633">
    <property type="term" value="P:fatty acid biosynthetic process"/>
    <property type="evidence" value="ECO:0007669"/>
    <property type="project" value="UniProtKB-UniRule"/>
</dbReference>
<dbReference type="GO" id="GO:0019878">
    <property type="term" value="P:lysine biosynthetic process via aminoadipic acid"/>
    <property type="evidence" value="ECO:0007669"/>
    <property type="project" value="TreeGrafter"/>
</dbReference>
<dbReference type="Gene3D" id="3.90.470.20">
    <property type="entry name" value="4'-phosphopantetheinyl transferase domain"/>
    <property type="match status" value="1"/>
</dbReference>
<dbReference type="HAMAP" id="MF_00101">
    <property type="entry name" value="AcpS"/>
    <property type="match status" value="1"/>
</dbReference>
<dbReference type="InterPro" id="IPR008278">
    <property type="entry name" value="4-PPantetheinyl_Trfase_dom"/>
</dbReference>
<dbReference type="InterPro" id="IPR037143">
    <property type="entry name" value="4-PPantetheinyl_Trfase_dom_sf"/>
</dbReference>
<dbReference type="InterPro" id="IPR002582">
    <property type="entry name" value="ACPS"/>
</dbReference>
<dbReference type="InterPro" id="IPR050559">
    <property type="entry name" value="P-Pant_transferase_sf"/>
</dbReference>
<dbReference type="InterPro" id="IPR004568">
    <property type="entry name" value="Ppantetheine-prot_Trfase_dom"/>
</dbReference>
<dbReference type="NCBIfam" id="TIGR00516">
    <property type="entry name" value="acpS"/>
    <property type="match status" value="1"/>
</dbReference>
<dbReference type="NCBIfam" id="TIGR00556">
    <property type="entry name" value="pantethn_trn"/>
    <property type="match status" value="1"/>
</dbReference>
<dbReference type="PANTHER" id="PTHR12215:SF10">
    <property type="entry name" value="L-AMINOADIPATE-SEMIALDEHYDE DEHYDROGENASE-PHOSPHOPANTETHEINYL TRANSFERASE"/>
    <property type="match status" value="1"/>
</dbReference>
<dbReference type="PANTHER" id="PTHR12215">
    <property type="entry name" value="PHOSPHOPANTETHEINE TRANSFERASE"/>
    <property type="match status" value="1"/>
</dbReference>
<dbReference type="Pfam" id="PF01648">
    <property type="entry name" value="ACPS"/>
    <property type="match status" value="1"/>
</dbReference>
<dbReference type="SUPFAM" id="SSF56214">
    <property type="entry name" value="4'-phosphopantetheinyl transferase"/>
    <property type="match status" value="1"/>
</dbReference>
<keyword id="KW-0963">Cytoplasm</keyword>
<keyword id="KW-0275">Fatty acid biosynthesis</keyword>
<keyword id="KW-0276">Fatty acid metabolism</keyword>
<keyword id="KW-0444">Lipid biosynthesis</keyword>
<keyword id="KW-0443">Lipid metabolism</keyword>
<keyword id="KW-0460">Magnesium</keyword>
<keyword id="KW-0479">Metal-binding</keyword>
<keyword id="KW-0808">Transferase</keyword>
<sequence>MIIGIGIDIVELERIEQLMMKNEKFIDRILTEEEKRIFFQLSPKRKVEFLAGRFAAKEAYAKAIGTGIGKNVSFHDIQIMNDDNGKPIVVSNGKDCRIHVSISHSRDYAIAQVIIERLS</sequence>
<reference key="1">
    <citation type="submission" date="2009-06" db="EMBL/GenBank/DDBJ databases">
        <title>Complete sequence of chromosome of Geopacillus sp. WCH70.</title>
        <authorList>
            <consortium name="US DOE Joint Genome Institute"/>
            <person name="Lucas S."/>
            <person name="Copeland A."/>
            <person name="Lapidus A."/>
            <person name="Glavina del Rio T."/>
            <person name="Dalin E."/>
            <person name="Tice H."/>
            <person name="Bruce D."/>
            <person name="Goodwin L."/>
            <person name="Pitluck S."/>
            <person name="Chertkov O."/>
            <person name="Brettin T."/>
            <person name="Detter J.C."/>
            <person name="Han C."/>
            <person name="Larimer F."/>
            <person name="Land M."/>
            <person name="Hauser L."/>
            <person name="Kyrpides N."/>
            <person name="Mikhailova N."/>
            <person name="Brumm P."/>
            <person name="Mead D.A."/>
            <person name="Richardson P."/>
        </authorList>
    </citation>
    <scope>NUCLEOTIDE SEQUENCE [LARGE SCALE GENOMIC DNA]</scope>
    <source>
        <strain>WCH70</strain>
    </source>
</reference>
<protein>
    <recommendedName>
        <fullName evidence="1">Holo-[acyl-carrier-protein] synthase</fullName>
        <shortName evidence="1">Holo-ACP synthase</shortName>
        <ecNumber evidence="1">2.7.8.7</ecNumber>
    </recommendedName>
    <alternativeName>
        <fullName evidence="1">4'-phosphopantetheinyl transferase AcpS</fullName>
    </alternativeName>
</protein>
<proteinExistence type="inferred from homology"/>
<evidence type="ECO:0000255" key="1">
    <source>
        <dbReference type="HAMAP-Rule" id="MF_00101"/>
    </source>
</evidence>
<name>ACPS_GEOSW</name>
<feature type="chain" id="PRO_1000202797" description="Holo-[acyl-carrier-protein] synthase">
    <location>
        <begin position="1"/>
        <end position="119"/>
    </location>
</feature>
<feature type="binding site" evidence="1">
    <location>
        <position position="8"/>
    </location>
    <ligand>
        <name>Mg(2+)</name>
        <dbReference type="ChEBI" id="CHEBI:18420"/>
    </ligand>
</feature>
<feature type="binding site" evidence="1">
    <location>
        <position position="58"/>
    </location>
    <ligand>
        <name>Mg(2+)</name>
        <dbReference type="ChEBI" id="CHEBI:18420"/>
    </ligand>
</feature>